<dbReference type="EC" id="7.1.1.-" evidence="1"/>
<dbReference type="EMBL" id="DQ359689">
    <property type="protein sequence ID" value="ABC70803.1"/>
    <property type="molecule type" value="Genomic_DNA"/>
</dbReference>
<dbReference type="RefSeq" id="YP_001004233.1">
    <property type="nucleotide sequence ID" value="NC_008796.1"/>
</dbReference>
<dbReference type="SMR" id="A1XGT5"/>
<dbReference type="GeneID" id="4712185"/>
<dbReference type="GO" id="GO:0009535">
    <property type="term" value="C:chloroplast thylakoid membrane"/>
    <property type="evidence" value="ECO:0007669"/>
    <property type="project" value="UniProtKB-SubCell"/>
</dbReference>
<dbReference type="GO" id="GO:0051287">
    <property type="term" value="F:NAD binding"/>
    <property type="evidence" value="ECO:0007669"/>
    <property type="project" value="InterPro"/>
</dbReference>
<dbReference type="GO" id="GO:0016655">
    <property type="term" value="F:oxidoreductase activity, acting on NAD(P)H, quinone or similar compound as acceptor"/>
    <property type="evidence" value="ECO:0007669"/>
    <property type="project" value="UniProtKB-UniRule"/>
</dbReference>
<dbReference type="GO" id="GO:0048038">
    <property type="term" value="F:quinone binding"/>
    <property type="evidence" value="ECO:0007669"/>
    <property type="project" value="UniProtKB-KW"/>
</dbReference>
<dbReference type="GO" id="GO:0019684">
    <property type="term" value="P:photosynthesis, light reaction"/>
    <property type="evidence" value="ECO:0007669"/>
    <property type="project" value="UniProtKB-UniRule"/>
</dbReference>
<dbReference type="FunFam" id="1.10.645.10:FF:000003">
    <property type="entry name" value="NAD(P)H-quinone oxidoreductase subunit H, chloroplastic"/>
    <property type="match status" value="1"/>
</dbReference>
<dbReference type="Gene3D" id="1.10.645.10">
    <property type="entry name" value="Cytochrome-c3 Hydrogenase, chain B"/>
    <property type="match status" value="1"/>
</dbReference>
<dbReference type="HAMAP" id="MF_01358">
    <property type="entry name" value="NDH1_NuoD"/>
    <property type="match status" value="1"/>
</dbReference>
<dbReference type="InterPro" id="IPR001135">
    <property type="entry name" value="NADH_Q_OxRdtase_suD"/>
</dbReference>
<dbReference type="InterPro" id="IPR014029">
    <property type="entry name" value="NADH_UbQ_OxRdtase_49kDa_CS"/>
</dbReference>
<dbReference type="InterPro" id="IPR022885">
    <property type="entry name" value="NDH1_su_D/H"/>
</dbReference>
<dbReference type="InterPro" id="IPR029014">
    <property type="entry name" value="NiFe-Hase_large"/>
</dbReference>
<dbReference type="NCBIfam" id="NF004739">
    <property type="entry name" value="PRK06075.1"/>
    <property type="match status" value="1"/>
</dbReference>
<dbReference type="NCBIfam" id="NF005649">
    <property type="entry name" value="PRK07415.1"/>
    <property type="match status" value="1"/>
</dbReference>
<dbReference type="PANTHER" id="PTHR11993:SF10">
    <property type="entry name" value="NADH DEHYDROGENASE [UBIQUINONE] IRON-SULFUR PROTEIN 2, MITOCHONDRIAL"/>
    <property type="match status" value="1"/>
</dbReference>
<dbReference type="PANTHER" id="PTHR11993">
    <property type="entry name" value="NADH-UBIQUINONE OXIDOREDUCTASE 49 KDA SUBUNIT"/>
    <property type="match status" value="1"/>
</dbReference>
<dbReference type="Pfam" id="PF00346">
    <property type="entry name" value="Complex1_49kDa"/>
    <property type="match status" value="1"/>
</dbReference>
<dbReference type="SUPFAM" id="SSF56762">
    <property type="entry name" value="HydB/Nqo4-like"/>
    <property type="match status" value="1"/>
</dbReference>
<dbReference type="PROSITE" id="PS00535">
    <property type="entry name" value="COMPLEX1_49K"/>
    <property type="match status" value="1"/>
</dbReference>
<evidence type="ECO:0000255" key="1">
    <source>
        <dbReference type="HAMAP-Rule" id="MF_01358"/>
    </source>
</evidence>
<name>NDHH_RANMC</name>
<organism>
    <name type="scientific">Ranunculus macranthus</name>
    <name type="common">Large buttercup</name>
    <dbReference type="NCBI Taxonomy" id="334596"/>
    <lineage>
        <taxon>Eukaryota</taxon>
        <taxon>Viridiplantae</taxon>
        <taxon>Streptophyta</taxon>
        <taxon>Embryophyta</taxon>
        <taxon>Tracheophyta</taxon>
        <taxon>Spermatophyta</taxon>
        <taxon>Magnoliopsida</taxon>
        <taxon>Ranunculales</taxon>
        <taxon>Ranunculaceae</taxon>
        <taxon>Ranunculoideae</taxon>
        <taxon>Ranunculeae</taxon>
        <taxon>Ranunculus</taxon>
    </lineage>
</organism>
<feature type="chain" id="PRO_0000358025" description="NAD(P)H-quinone oxidoreductase subunit H, chloroplastic">
    <location>
        <begin position="1"/>
        <end position="393"/>
    </location>
</feature>
<geneLocation type="chloroplast"/>
<reference key="1">
    <citation type="journal article" date="2007" name="BMC Genomics">
        <title>Comparative chloroplast genomics: analyses including new sequences from the angiosperms Nuphar advena and Ranunculus macranthus.</title>
        <authorList>
            <person name="Raubeson L.A."/>
            <person name="Peery R."/>
            <person name="Chumley T.W."/>
            <person name="Dziubek C."/>
            <person name="Fourcade H.M."/>
            <person name="Boore J.L."/>
            <person name="Jansen R.K."/>
        </authorList>
    </citation>
    <scope>NUCLEOTIDE SEQUENCE [LARGE SCALE GENOMIC DNA]</scope>
</reference>
<accession>A1XGT5</accession>
<proteinExistence type="inferred from homology"/>
<gene>
    <name evidence="1" type="primary">ndhH</name>
</gene>
<keyword id="KW-0150">Chloroplast</keyword>
<keyword id="KW-0472">Membrane</keyword>
<keyword id="KW-0520">NAD</keyword>
<keyword id="KW-0521">NADP</keyword>
<keyword id="KW-0934">Plastid</keyword>
<keyword id="KW-0618">Plastoquinone</keyword>
<keyword id="KW-0874">Quinone</keyword>
<keyword id="KW-0793">Thylakoid</keyword>
<keyword id="KW-1278">Translocase</keyword>
<keyword id="KW-0813">Transport</keyword>
<protein>
    <recommendedName>
        <fullName evidence="1">NAD(P)H-quinone oxidoreductase subunit H, chloroplastic</fullName>
        <ecNumber evidence="1">7.1.1.-</ecNumber>
    </recommendedName>
    <alternativeName>
        <fullName>NAD(P)H dehydrogenase subunit H</fullName>
    </alternativeName>
    <alternativeName>
        <fullName evidence="1">NADH-plastoquinone oxidoreductase 49 kDa subunit</fullName>
    </alternativeName>
    <alternativeName>
        <fullName evidence="1">NADH-plastoquinone oxidoreductase subunit H</fullName>
    </alternativeName>
</protein>
<sequence length="393" mass="45486">MTVPTTRKDLMIVNMGPQHPSMHGVLRLVVTLDGEDVIDCEPILGYLHRGMEKIAENRTIIQYLPYVTRWDYLATMFTEAITVNGPEQLGNIQVPKRASYIRVIMLELSRIASHLLWLGPFMADIGAQTPFFYIFRERELIYDLFESATGMRMMHNYFRIGGVAADLPYGWIDKCLDFCDYFLTGVTEYQKLITRNPIFLERVEGVGIIGGEEAINWGLSGPMLRASGIQWDLRKVDHYECYDEFDWEVQWQKEGDSLARYLVRISEMTESIKILQQALEGIPGGPYENLEVRRFDRAKDSEWNDFDYRFISKKPSPTFELSKQELYVRVEAPKGELGIFLVGDKSVFPWRWKIRPPGFINLQILPQLVKRMKLADIMTILGSIDIIMGEVDR</sequence>
<comment type="function">
    <text evidence="1">NDH shuttles electrons from NAD(P)H:plastoquinone, via FMN and iron-sulfur (Fe-S) centers, to quinones in the photosynthetic chain and possibly in a chloroplast respiratory chain. The immediate electron acceptor for the enzyme in this species is believed to be plastoquinone. Couples the redox reaction to proton translocation, and thus conserves the redox energy in a proton gradient.</text>
</comment>
<comment type="catalytic activity">
    <reaction evidence="1">
        <text>a plastoquinone + NADH + (n+1) H(+)(in) = a plastoquinol + NAD(+) + n H(+)(out)</text>
        <dbReference type="Rhea" id="RHEA:42608"/>
        <dbReference type="Rhea" id="RHEA-COMP:9561"/>
        <dbReference type="Rhea" id="RHEA-COMP:9562"/>
        <dbReference type="ChEBI" id="CHEBI:15378"/>
        <dbReference type="ChEBI" id="CHEBI:17757"/>
        <dbReference type="ChEBI" id="CHEBI:57540"/>
        <dbReference type="ChEBI" id="CHEBI:57945"/>
        <dbReference type="ChEBI" id="CHEBI:62192"/>
    </reaction>
</comment>
<comment type="catalytic activity">
    <reaction evidence="1">
        <text>a plastoquinone + NADPH + (n+1) H(+)(in) = a plastoquinol + NADP(+) + n H(+)(out)</text>
        <dbReference type="Rhea" id="RHEA:42612"/>
        <dbReference type="Rhea" id="RHEA-COMP:9561"/>
        <dbReference type="Rhea" id="RHEA-COMP:9562"/>
        <dbReference type="ChEBI" id="CHEBI:15378"/>
        <dbReference type="ChEBI" id="CHEBI:17757"/>
        <dbReference type="ChEBI" id="CHEBI:57783"/>
        <dbReference type="ChEBI" id="CHEBI:58349"/>
        <dbReference type="ChEBI" id="CHEBI:62192"/>
    </reaction>
</comment>
<comment type="subunit">
    <text evidence="1">NDH is composed of at least 16 different subunits, 5 of which are encoded in the nucleus.</text>
</comment>
<comment type="subcellular location">
    <subcellularLocation>
        <location evidence="1">Plastid</location>
        <location evidence="1">Chloroplast thylakoid membrane</location>
        <topology evidence="1">Peripheral membrane protein</topology>
        <orientation evidence="1">Stromal side</orientation>
    </subcellularLocation>
</comment>
<comment type="similarity">
    <text evidence="1">Belongs to the complex I 49 kDa subunit family.</text>
</comment>